<evidence type="ECO:0000255" key="1">
    <source>
        <dbReference type="PROSITE-ProRule" id="PRU00176"/>
    </source>
</evidence>
<feature type="chain" id="PRO_0000264248" description="RNA-binding protein 43">
    <location>
        <begin position="1"/>
        <end position="343"/>
    </location>
</feature>
<feature type="domain" description="RRM" evidence="1">
    <location>
        <begin position="15"/>
        <end position="90"/>
    </location>
</feature>
<proteinExistence type="evidence at transcript level"/>
<keyword id="KW-1185">Reference proteome</keyword>
<keyword id="KW-0694">RNA-binding</keyword>
<accession>Q99J64</accession>
<name>RBM43_MOUSE</name>
<organism>
    <name type="scientific">Mus musculus</name>
    <name type="common">Mouse</name>
    <dbReference type="NCBI Taxonomy" id="10090"/>
    <lineage>
        <taxon>Eukaryota</taxon>
        <taxon>Metazoa</taxon>
        <taxon>Chordata</taxon>
        <taxon>Craniata</taxon>
        <taxon>Vertebrata</taxon>
        <taxon>Euteleostomi</taxon>
        <taxon>Mammalia</taxon>
        <taxon>Eutheria</taxon>
        <taxon>Euarchontoglires</taxon>
        <taxon>Glires</taxon>
        <taxon>Rodentia</taxon>
        <taxon>Myomorpha</taxon>
        <taxon>Muroidea</taxon>
        <taxon>Muridae</taxon>
        <taxon>Murinae</taxon>
        <taxon>Mus</taxon>
        <taxon>Mus</taxon>
    </lineage>
</organism>
<dbReference type="EMBL" id="AK002739">
    <property type="protein sequence ID" value="BAC25004.1"/>
    <property type="molecule type" value="mRNA"/>
</dbReference>
<dbReference type="EMBL" id="BC003333">
    <property type="protein sequence ID" value="AAH03333.1"/>
    <property type="molecule type" value="mRNA"/>
</dbReference>
<dbReference type="CCDS" id="CCDS16030.1"/>
<dbReference type="RefSeq" id="NP_001135453.1">
    <property type="nucleotide sequence ID" value="NM_001141981.2"/>
</dbReference>
<dbReference type="RefSeq" id="NP_001135454.1">
    <property type="nucleotide sequence ID" value="NM_001141982.2"/>
</dbReference>
<dbReference type="RefSeq" id="NP_001342533.1">
    <property type="nucleotide sequence ID" value="NM_001355604.1"/>
</dbReference>
<dbReference type="RefSeq" id="NP_001342535.1">
    <property type="nucleotide sequence ID" value="NM_001355606.1"/>
</dbReference>
<dbReference type="RefSeq" id="NP_001342536.1">
    <property type="nucleotide sequence ID" value="NM_001355607.1"/>
</dbReference>
<dbReference type="RefSeq" id="NP_084519.1">
    <property type="nucleotide sequence ID" value="NM_030243.5"/>
</dbReference>
<dbReference type="RefSeq" id="XP_006498403.1">
    <property type="nucleotide sequence ID" value="XM_006498340.3"/>
</dbReference>
<dbReference type="RefSeq" id="XP_006498404.1">
    <property type="nucleotide sequence ID" value="XM_006498341.3"/>
</dbReference>
<dbReference type="RefSeq" id="XP_006498405.1">
    <property type="nucleotide sequence ID" value="XM_006498342.3"/>
</dbReference>
<dbReference type="RefSeq" id="XP_006498406.1">
    <property type="nucleotide sequence ID" value="XM_006498343.5"/>
</dbReference>
<dbReference type="RefSeq" id="XP_006498407.1">
    <property type="nucleotide sequence ID" value="XM_006498344.2"/>
</dbReference>
<dbReference type="RefSeq" id="XP_006498408.1">
    <property type="nucleotide sequence ID" value="XM_006498345.3"/>
</dbReference>
<dbReference type="RefSeq" id="XP_011237487.1">
    <property type="nucleotide sequence ID" value="XM_011239185.2"/>
</dbReference>
<dbReference type="RefSeq" id="XP_011237489.1">
    <property type="nucleotide sequence ID" value="XM_011239187.1"/>
</dbReference>
<dbReference type="RefSeq" id="XP_030107951.1">
    <property type="nucleotide sequence ID" value="XM_030252091.1"/>
</dbReference>
<dbReference type="SMR" id="Q99J64"/>
<dbReference type="FunCoup" id="Q99J64">
    <property type="interactions" value="44"/>
</dbReference>
<dbReference type="STRING" id="10090.ENSMUSP00000099829"/>
<dbReference type="PhosphoSitePlus" id="Q99J64"/>
<dbReference type="PaxDb" id="10090-ENSMUSP00000099828"/>
<dbReference type="PeptideAtlas" id="Q99J64"/>
<dbReference type="ProteomicsDB" id="255040"/>
<dbReference type="Antibodypedia" id="51960">
    <property type="antibodies" value="76 antibodies from 16 providers"/>
</dbReference>
<dbReference type="DNASU" id="71684"/>
<dbReference type="Ensembl" id="ENSMUST00000102767.8">
    <property type="protein sequence ID" value="ENSMUSP00000099828.2"/>
    <property type="gene ID" value="ENSMUSG00000036249.17"/>
</dbReference>
<dbReference type="Ensembl" id="ENSMUST00000102768.8">
    <property type="protein sequence ID" value="ENSMUSP00000099829.2"/>
    <property type="gene ID" value="ENSMUSG00000036249.17"/>
</dbReference>
<dbReference type="Ensembl" id="ENSMUST00000165313.2">
    <property type="protein sequence ID" value="ENSMUSP00000126129.2"/>
    <property type="gene ID" value="ENSMUSG00000036249.17"/>
</dbReference>
<dbReference type="GeneID" id="71684"/>
<dbReference type="KEGG" id="mmu:71684"/>
<dbReference type="UCSC" id="uc008jqk.2">
    <property type="organism name" value="mouse"/>
</dbReference>
<dbReference type="AGR" id="MGI:1918934"/>
<dbReference type="CTD" id="375287"/>
<dbReference type="MGI" id="MGI:1918934">
    <property type="gene designation" value="Rbm43"/>
</dbReference>
<dbReference type="VEuPathDB" id="HostDB:ENSMUSG00000036249"/>
<dbReference type="eggNOG" id="KOG4012">
    <property type="taxonomic scope" value="Eukaryota"/>
</dbReference>
<dbReference type="GeneTree" id="ENSGT00530000063686"/>
<dbReference type="HOGENOM" id="CLU_067477_0_0_1"/>
<dbReference type="InParanoid" id="Q99J64"/>
<dbReference type="OMA" id="FYETHID"/>
<dbReference type="OrthoDB" id="9948435at2759"/>
<dbReference type="PhylomeDB" id="Q99J64"/>
<dbReference type="TreeFam" id="TF335737"/>
<dbReference type="BioGRID-ORCS" id="71684">
    <property type="hits" value="0 hits in 76 CRISPR screens"/>
</dbReference>
<dbReference type="ChiTaRS" id="Rbm43">
    <property type="organism name" value="mouse"/>
</dbReference>
<dbReference type="PRO" id="PR:Q99J64"/>
<dbReference type="Proteomes" id="UP000000589">
    <property type="component" value="Chromosome 2"/>
</dbReference>
<dbReference type="RNAct" id="Q99J64">
    <property type="molecule type" value="protein"/>
</dbReference>
<dbReference type="Bgee" id="ENSMUSG00000036249">
    <property type="expression patterns" value="Expressed in spermatid and 243 other cell types or tissues"/>
</dbReference>
<dbReference type="GO" id="GO:0003723">
    <property type="term" value="F:RNA binding"/>
    <property type="evidence" value="ECO:0007669"/>
    <property type="project" value="UniProtKB-KW"/>
</dbReference>
<dbReference type="Gene3D" id="3.30.70.330">
    <property type="match status" value="1"/>
</dbReference>
<dbReference type="InterPro" id="IPR012677">
    <property type="entry name" value="Nucleotide-bd_a/b_plait_sf"/>
</dbReference>
<dbReference type="InterPro" id="IPR035979">
    <property type="entry name" value="RBD_domain_sf"/>
</dbReference>
<dbReference type="InterPro" id="IPR000504">
    <property type="entry name" value="RRM_dom"/>
</dbReference>
<dbReference type="PANTHER" id="PTHR15225">
    <property type="entry name" value="INTERFERON-INDUCED PROTEIN 35/NMI N-MYC/STAT INTERACTING PROTEIN"/>
    <property type="match status" value="1"/>
</dbReference>
<dbReference type="PANTHER" id="PTHR15225:SF8">
    <property type="entry name" value="RNA-BINDING PROTEIN 43"/>
    <property type="match status" value="1"/>
</dbReference>
<dbReference type="SUPFAM" id="SSF54928">
    <property type="entry name" value="RNA-binding domain, RBD"/>
    <property type="match status" value="1"/>
</dbReference>
<dbReference type="PROSITE" id="PS50102">
    <property type="entry name" value="RRM"/>
    <property type="match status" value="1"/>
</dbReference>
<sequence>MASAWKVKDPTVAERTVVVSGLPVGLLKDQLVKCYFQDEGGHVEEVIYPSKSKGVAYIIFKEKKVAQDFIRQKKHPPGSEPRLTVSHFSEKVFNYVMAILDLSVFRTQIELESLVVDLKKKIPTLNFSPLGPSGKISVQGSFLAIMKLKQALISKAISPLENNRKDAGERRNWNGENPRRILQKRENSASILGTFVAEPAGSPETLVLDTDIFLYLKHKCEFYHLTLSKYHVLCQERVDGDVTTICLQDAQDGSCSGSVRHVKEFIEECAQEFHLELRKELLVLEGMGDREKRNIRQALEELGGRYPRVLTNVHSTHIDLIGPPSDTYLFKTQLMKSAGQKVT</sequence>
<reference key="1">
    <citation type="journal article" date="2005" name="Science">
        <title>The transcriptional landscape of the mammalian genome.</title>
        <authorList>
            <person name="Carninci P."/>
            <person name="Kasukawa T."/>
            <person name="Katayama S."/>
            <person name="Gough J."/>
            <person name="Frith M.C."/>
            <person name="Maeda N."/>
            <person name="Oyama R."/>
            <person name="Ravasi T."/>
            <person name="Lenhard B."/>
            <person name="Wells C."/>
            <person name="Kodzius R."/>
            <person name="Shimokawa K."/>
            <person name="Bajic V.B."/>
            <person name="Brenner S.E."/>
            <person name="Batalov S."/>
            <person name="Forrest A.R."/>
            <person name="Zavolan M."/>
            <person name="Davis M.J."/>
            <person name="Wilming L.G."/>
            <person name="Aidinis V."/>
            <person name="Allen J.E."/>
            <person name="Ambesi-Impiombato A."/>
            <person name="Apweiler R."/>
            <person name="Aturaliya R.N."/>
            <person name="Bailey T.L."/>
            <person name="Bansal M."/>
            <person name="Baxter L."/>
            <person name="Beisel K.W."/>
            <person name="Bersano T."/>
            <person name="Bono H."/>
            <person name="Chalk A.M."/>
            <person name="Chiu K.P."/>
            <person name="Choudhary V."/>
            <person name="Christoffels A."/>
            <person name="Clutterbuck D.R."/>
            <person name="Crowe M.L."/>
            <person name="Dalla E."/>
            <person name="Dalrymple B.P."/>
            <person name="de Bono B."/>
            <person name="Della Gatta G."/>
            <person name="di Bernardo D."/>
            <person name="Down T."/>
            <person name="Engstrom P."/>
            <person name="Fagiolini M."/>
            <person name="Faulkner G."/>
            <person name="Fletcher C.F."/>
            <person name="Fukushima T."/>
            <person name="Furuno M."/>
            <person name="Futaki S."/>
            <person name="Gariboldi M."/>
            <person name="Georgii-Hemming P."/>
            <person name="Gingeras T.R."/>
            <person name="Gojobori T."/>
            <person name="Green R.E."/>
            <person name="Gustincich S."/>
            <person name="Harbers M."/>
            <person name="Hayashi Y."/>
            <person name="Hensch T.K."/>
            <person name="Hirokawa N."/>
            <person name="Hill D."/>
            <person name="Huminiecki L."/>
            <person name="Iacono M."/>
            <person name="Ikeo K."/>
            <person name="Iwama A."/>
            <person name="Ishikawa T."/>
            <person name="Jakt M."/>
            <person name="Kanapin A."/>
            <person name="Katoh M."/>
            <person name="Kawasawa Y."/>
            <person name="Kelso J."/>
            <person name="Kitamura H."/>
            <person name="Kitano H."/>
            <person name="Kollias G."/>
            <person name="Krishnan S.P."/>
            <person name="Kruger A."/>
            <person name="Kummerfeld S.K."/>
            <person name="Kurochkin I.V."/>
            <person name="Lareau L.F."/>
            <person name="Lazarevic D."/>
            <person name="Lipovich L."/>
            <person name="Liu J."/>
            <person name="Liuni S."/>
            <person name="McWilliam S."/>
            <person name="Madan Babu M."/>
            <person name="Madera M."/>
            <person name="Marchionni L."/>
            <person name="Matsuda H."/>
            <person name="Matsuzawa S."/>
            <person name="Miki H."/>
            <person name="Mignone F."/>
            <person name="Miyake S."/>
            <person name="Morris K."/>
            <person name="Mottagui-Tabar S."/>
            <person name="Mulder N."/>
            <person name="Nakano N."/>
            <person name="Nakauchi H."/>
            <person name="Ng P."/>
            <person name="Nilsson R."/>
            <person name="Nishiguchi S."/>
            <person name="Nishikawa S."/>
            <person name="Nori F."/>
            <person name="Ohara O."/>
            <person name="Okazaki Y."/>
            <person name="Orlando V."/>
            <person name="Pang K.C."/>
            <person name="Pavan W.J."/>
            <person name="Pavesi G."/>
            <person name="Pesole G."/>
            <person name="Petrovsky N."/>
            <person name="Piazza S."/>
            <person name="Reed J."/>
            <person name="Reid J.F."/>
            <person name="Ring B.Z."/>
            <person name="Ringwald M."/>
            <person name="Rost B."/>
            <person name="Ruan Y."/>
            <person name="Salzberg S.L."/>
            <person name="Sandelin A."/>
            <person name="Schneider C."/>
            <person name="Schoenbach C."/>
            <person name="Sekiguchi K."/>
            <person name="Semple C.A."/>
            <person name="Seno S."/>
            <person name="Sessa L."/>
            <person name="Sheng Y."/>
            <person name="Shibata Y."/>
            <person name="Shimada H."/>
            <person name="Shimada K."/>
            <person name="Silva D."/>
            <person name="Sinclair B."/>
            <person name="Sperling S."/>
            <person name="Stupka E."/>
            <person name="Sugiura K."/>
            <person name="Sultana R."/>
            <person name="Takenaka Y."/>
            <person name="Taki K."/>
            <person name="Tammoja K."/>
            <person name="Tan S.L."/>
            <person name="Tang S."/>
            <person name="Taylor M.S."/>
            <person name="Tegner J."/>
            <person name="Teichmann S.A."/>
            <person name="Ueda H.R."/>
            <person name="van Nimwegen E."/>
            <person name="Verardo R."/>
            <person name="Wei C.L."/>
            <person name="Yagi K."/>
            <person name="Yamanishi H."/>
            <person name="Zabarovsky E."/>
            <person name="Zhu S."/>
            <person name="Zimmer A."/>
            <person name="Hide W."/>
            <person name="Bult C."/>
            <person name="Grimmond S.M."/>
            <person name="Teasdale R.D."/>
            <person name="Liu E.T."/>
            <person name="Brusic V."/>
            <person name="Quackenbush J."/>
            <person name="Wahlestedt C."/>
            <person name="Mattick J.S."/>
            <person name="Hume D.A."/>
            <person name="Kai C."/>
            <person name="Sasaki D."/>
            <person name="Tomaru Y."/>
            <person name="Fukuda S."/>
            <person name="Kanamori-Katayama M."/>
            <person name="Suzuki M."/>
            <person name="Aoki J."/>
            <person name="Arakawa T."/>
            <person name="Iida J."/>
            <person name="Imamura K."/>
            <person name="Itoh M."/>
            <person name="Kato T."/>
            <person name="Kawaji H."/>
            <person name="Kawagashira N."/>
            <person name="Kawashima T."/>
            <person name="Kojima M."/>
            <person name="Kondo S."/>
            <person name="Konno H."/>
            <person name="Nakano K."/>
            <person name="Ninomiya N."/>
            <person name="Nishio T."/>
            <person name="Okada M."/>
            <person name="Plessy C."/>
            <person name="Shibata K."/>
            <person name="Shiraki T."/>
            <person name="Suzuki S."/>
            <person name="Tagami M."/>
            <person name="Waki K."/>
            <person name="Watahiki A."/>
            <person name="Okamura-Oho Y."/>
            <person name="Suzuki H."/>
            <person name="Kawai J."/>
            <person name="Hayashizaki Y."/>
        </authorList>
    </citation>
    <scope>NUCLEOTIDE SEQUENCE [LARGE SCALE MRNA]</scope>
    <source>
        <strain>C57BL/6J</strain>
        <tissue>Kidney</tissue>
    </source>
</reference>
<reference key="2">
    <citation type="journal article" date="2004" name="Genome Res.">
        <title>The status, quality, and expansion of the NIH full-length cDNA project: the Mammalian Gene Collection (MGC).</title>
        <authorList>
            <consortium name="The MGC Project Team"/>
        </authorList>
    </citation>
    <scope>NUCLEOTIDE SEQUENCE [LARGE SCALE MRNA]</scope>
    <source>
        <strain>NMRI</strain>
        <tissue>Mammary tumor</tissue>
    </source>
</reference>
<gene>
    <name type="primary">Rbm43</name>
</gene>
<protein>
    <recommendedName>
        <fullName>RNA-binding protein 43</fullName>
    </recommendedName>
    <alternativeName>
        <fullName>RNA-binding motif protein 43</fullName>
    </alternativeName>
</protein>